<name>IDI_STRAW</name>
<evidence type="ECO:0000255" key="1">
    <source>
        <dbReference type="HAMAP-Rule" id="MF_00202"/>
    </source>
</evidence>
<proteinExistence type="inferred from homology"/>
<protein>
    <recommendedName>
        <fullName evidence="1">Isopentenyl-diphosphate Delta-isomerase</fullName>
        <shortName evidence="1">IPP isomerase</shortName>
        <ecNumber evidence="1">5.3.3.2</ecNumber>
    </recommendedName>
    <alternativeName>
        <fullName evidence="1">IPP:DMAPP isomerase</fullName>
    </alternativeName>
    <alternativeName>
        <fullName evidence="1">Isopentenyl pyrophosphate isomerase</fullName>
    </alternativeName>
</protein>
<organism>
    <name type="scientific">Streptomyces avermitilis (strain ATCC 31267 / DSM 46492 / JCM 5070 / NBRC 14893 / NCIMB 12804 / NRRL 8165 / MA-4680)</name>
    <dbReference type="NCBI Taxonomy" id="227882"/>
    <lineage>
        <taxon>Bacteria</taxon>
        <taxon>Bacillati</taxon>
        <taxon>Actinomycetota</taxon>
        <taxon>Actinomycetes</taxon>
        <taxon>Kitasatosporales</taxon>
        <taxon>Streptomycetaceae</taxon>
        <taxon>Streptomyces</taxon>
    </lineage>
</organism>
<feature type="chain" id="PRO_0000205268" description="Isopentenyl-diphosphate Delta-isomerase">
    <location>
        <begin position="1"/>
        <end position="197"/>
    </location>
</feature>
<feature type="domain" description="Nudix hydrolase">
    <location>
        <begin position="46"/>
        <end position="183"/>
    </location>
</feature>
<feature type="active site" evidence="1">
    <location>
        <position position="83"/>
    </location>
</feature>
<feature type="active site" evidence="1">
    <location>
        <position position="132"/>
    </location>
</feature>
<feature type="binding site" evidence="1">
    <location>
        <position position="41"/>
    </location>
    <ligand>
        <name>Mn(2+)</name>
        <dbReference type="ChEBI" id="CHEBI:29035"/>
    </ligand>
</feature>
<feature type="binding site" evidence="1">
    <location>
        <position position="48"/>
    </location>
    <ligand>
        <name>Mn(2+)</name>
        <dbReference type="ChEBI" id="CHEBI:29035"/>
    </ligand>
</feature>
<feature type="binding site" evidence="1">
    <location>
        <position position="83"/>
    </location>
    <ligand>
        <name>Mg(2+)</name>
        <dbReference type="ChEBI" id="CHEBI:18420"/>
    </ligand>
</feature>
<feature type="binding site" evidence="1">
    <location>
        <position position="85"/>
    </location>
    <ligand>
        <name>Mn(2+)</name>
        <dbReference type="ChEBI" id="CHEBI:29035"/>
    </ligand>
</feature>
<feature type="binding site" evidence="1">
    <location>
        <position position="103"/>
    </location>
    <ligand>
        <name>Mg(2+)</name>
        <dbReference type="ChEBI" id="CHEBI:18420"/>
    </ligand>
</feature>
<feature type="binding site" evidence="1">
    <location>
        <position position="130"/>
    </location>
    <ligand>
        <name>Mn(2+)</name>
        <dbReference type="ChEBI" id="CHEBI:29035"/>
    </ligand>
</feature>
<feature type="binding site" evidence="1">
    <location>
        <position position="132"/>
    </location>
    <ligand>
        <name>Mn(2+)</name>
        <dbReference type="ChEBI" id="CHEBI:29035"/>
    </ligand>
</feature>
<sequence length="197" mass="21179">MPITPATSTHSSSNGTAEAILLELVDENGTTIGTAEKLAAHQPPGQLHRAFSVFLFDEQGRLLLQQRALGKYHSPGVWSNTCCGHPYPGEAPFAAAARRTHEELGVSPSLLAEAGTVRYNHPDPDSGLVEQEFNHLFVGLVQSPLRPDAEEIGDTAFVTAAELAERHAKDPFSSWFMTVLDAARPAVRELTGPSAGW</sequence>
<dbReference type="EC" id="5.3.3.2" evidence="1"/>
<dbReference type="EMBL" id="BA000030">
    <property type="protein sequence ID" value="BAC69374.1"/>
    <property type="molecule type" value="Genomic_DNA"/>
</dbReference>
<dbReference type="RefSeq" id="WP_010983102.1">
    <property type="nucleotide sequence ID" value="NZ_JZJK01000086.1"/>
</dbReference>
<dbReference type="SMR" id="Q82MJ7"/>
<dbReference type="GeneID" id="41538763"/>
<dbReference type="KEGG" id="sma:SAVERM_1663"/>
<dbReference type="eggNOG" id="COG1443">
    <property type="taxonomic scope" value="Bacteria"/>
</dbReference>
<dbReference type="HOGENOM" id="CLU_060552_2_1_11"/>
<dbReference type="OrthoDB" id="9809458at2"/>
<dbReference type="UniPathway" id="UPA00059">
    <property type="reaction ID" value="UER00104"/>
</dbReference>
<dbReference type="Proteomes" id="UP000000428">
    <property type="component" value="Chromosome"/>
</dbReference>
<dbReference type="GO" id="GO:0005737">
    <property type="term" value="C:cytoplasm"/>
    <property type="evidence" value="ECO:0007669"/>
    <property type="project" value="UniProtKB-SubCell"/>
</dbReference>
<dbReference type="GO" id="GO:0004452">
    <property type="term" value="F:isopentenyl-diphosphate delta-isomerase activity"/>
    <property type="evidence" value="ECO:0007669"/>
    <property type="project" value="UniProtKB-UniRule"/>
</dbReference>
<dbReference type="GO" id="GO:0046872">
    <property type="term" value="F:metal ion binding"/>
    <property type="evidence" value="ECO:0007669"/>
    <property type="project" value="UniProtKB-KW"/>
</dbReference>
<dbReference type="GO" id="GO:0050992">
    <property type="term" value="P:dimethylallyl diphosphate biosynthetic process"/>
    <property type="evidence" value="ECO:0007669"/>
    <property type="project" value="UniProtKB-UniRule"/>
</dbReference>
<dbReference type="GO" id="GO:0009240">
    <property type="term" value="P:isopentenyl diphosphate biosynthetic process"/>
    <property type="evidence" value="ECO:0007669"/>
    <property type="project" value="TreeGrafter"/>
</dbReference>
<dbReference type="CDD" id="cd02885">
    <property type="entry name" value="NUDIX_IPP_Isomerase"/>
    <property type="match status" value="1"/>
</dbReference>
<dbReference type="FunFam" id="3.90.79.10:FF:000009">
    <property type="entry name" value="Isopentenyl-diphosphate Delta-isomerase"/>
    <property type="match status" value="1"/>
</dbReference>
<dbReference type="Gene3D" id="3.90.79.10">
    <property type="entry name" value="Nucleoside Triphosphate Pyrophosphohydrolase"/>
    <property type="match status" value="1"/>
</dbReference>
<dbReference type="HAMAP" id="MF_00202">
    <property type="entry name" value="Idi"/>
    <property type="match status" value="1"/>
</dbReference>
<dbReference type="InterPro" id="IPR056375">
    <property type="entry name" value="Idi_bact"/>
</dbReference>
<dbReference type="InterPro" id="IPR011876">
    <property type="entry name" value="IsopentenylPP_isomerase_typ1"/>
</dbReference>
<dbReference type="InterPro" id="IPR015797">
    <property type="entry name" value="NUDIX_hydrolase-like_dom_sf"/>
</dbReference>
<dbReference type="InterPro" id="IPR000086">
    <property type="entry name" value="NUDIX_hydrolase_dom"/>
</dbReference>
<dbReference type="NCBIfam" id="TIGR02150">
    <property type="entry name" value="IPP_isom_1"/>
    <property type="match status" value="1"/>
</dbReference>
<dbReference type="NCBIfam" id="NF002995">
    <property type="entry name" value="PRK03759.1"/>
    <property type="match status" value="1"/>
</dbReference>
<dbReference type="PANTHER" id="PTHR10885">
    <property type="entry name" value="ISOPENTENYL-DIPHOSPHATE DELTA-ISOMERASE"/>
    <property type="match status" value="1"/>
</dbReference>
<dbReference type="PANTHER" id="PTHR10885:SF0">
    <property type="entry name" value="ISOPENTENYL-DIPHOSPHATE DELTA-ISOMERASE"/>
    <property type="match status" value="1"/>
</dbReference>
<dbReference type="Pfam" id="PF00293">
    <property type="entry name" value="NUDIX"/>
    <property type="match status" value="1"/>
</dbReference>
<dbReference type="PIRSF" id="PIRSF018427">
    <property type="entry name" value="Isopntndiph_ism"/>
    <property type="match status" value="1"/>
</dbReference>
<dbReference type="SUPFAM" id="SSF55811">
    <property type="entry name" value="Nudix"/>
    <property type="match status" value="1"/>
</dbReference>
<dbReference type="PROSITE" id="PS51462">
    <property type="entry name" value="NUDIX"/>
    <property type="match status" value="1"/>
</dbReference>
<reference key="1">
    <citation type="journal article" date="2001" name="Proc. Natl. Acad. Sci. U.S.A.">
        <title>Genome sequence of an industrial microorganism Streptomyces avermitilis: deducing the ability of producing secondary metabolites.</title>
        <authorList>
            <person name="Omura S."/>
            <person name="Ikeda H."/>
            <person name="Ishikawa J."/>
            <person name="Hanamoto A."/>
            <person name="Takahashi C."/>
            <person name="Shinose M."/>
            <person name="Takahashi Y."/>
            <person name="Horikawa H."/>
            <person name="Nakazawa H."/>
            <person name="Osonoe T."/>
            <person name="Kikuchi H."/>
            <person name="Shiba T."/>
            <person name="Sakaki Y."/>
            <person name="Hattori M."/>
        </authorList>
    </citation>
    <scope>NUCLEOTIDE SEQUENCE [LARGE SCALE GENOMIC DNA]</scope>
    <source>
        <strain>ATCC 31267 / DSM 46492 / JCM 5070 / NBRC 14893 / NCIMB 12804 / NRRL 8165 / MA-4680</strain>
    </source>
</reference>
<reference key="2">
    <citation type="journal article" date="2003" name="Nat. Biotechnol.">
        <title>Complete genome sequence and comparative analysis of the industrial microorganism Streptomyces avermitilis.</title>
        <authorList>
            <person name="Ikeda H."/>
            <person name="Ishikawa J."/>
            <person name="Hanamoto A."/>
            <person name="Shinose M."/>
            <person name="Kikuchi H."/>
            <person name="Shiba T."/>
            <person name="Sakaki Y."/>
            <person name="Hattori M."/>
            <person name="Omura S."/>
        </authorList>
    </citation>
    <scope>NUCLEOTIDE SEQUENCE [LARGE SCALE GENOMIC DNA]</scope>
    <source>
        <strain>ATCC 31267 / DSM 46492 / JCM 5070 / NBRC 14893 / NCIMB 12804 / NRRL 8165 / MA-4680</strain>
    </source>
</reference>
<accession>Q82MJ7</accession>
<keyword id="KW-0963">Cytoplasm</keyword>
<keyword id="KW-0413">Isomerase</keyword>
<keyword id="KW-0414">Isoprene biosynthesis</keyword>
<keyword id="KW-0460">Magnesium</keyword>
<keyword id="KW-0464">Manganese</keyword>
<keyword id="KW-0479">Metal-binding</keyword>
<keyword id="KW-1185">Reference proteome</keyword>
<gene>
    <name evidence="1" type="primary">idi</name>
    <name type="ordered locus">SAV_1663</name>
</gene>
<comment type="function">
    <text evidence="1">Catalyzes the 1,3-allylic rearrangement of the homoallylic substrate isopentenyl (IPP) to its highly electrophilic allylic isomer, dimethylallyl diphosphate (DMAPP).</text>
</comment>
<comment type="catalytic activity">
    <reaction evidence="1">
        <text>isopentenyl diphosphate = dimethylallyl diphosphate</text>
        <dbReference type="Rhea" id="RHEA:23284"/>
        <dbReference type="ChEBI" id="CHEBI:57623"/>
        <dbReference type="ChEBI" id="CHEBI:128769"/>
        <dbReference type="EC" id="5.3.3.2"/>
    </reaction>
</comment>
<comment type="cofactor">
    <cofactor evidence="1">
        <name>Mg(2+)</name>
        <dbReference type="ChEBI" id="CHEBI:18420"/>
    </cofactor>
    <text evidence="1">Binds 1 Mg(2+) ion per subunit. The magnesium ion binds only when substrate is bound.</text>
</comment>
<comment type="cofactor">
    <cofactor evidence="1">
        <name>Mn(2+)</name>
        <dbReference type="ChEBI" id="CHEBI:29035"/>
    </cofactor>
    <text evidence="1">Binds 1 Mn(2+) ion per subunit.</text>
</comment>
<comment type="pathway">
    <text evidence="1">Isoprenoid biosynthesis; dimethylallyl diphosphate biosynthesis; dimethylallyl diphosphate from isopentenyl diphosphate: step 1/1.</text>
</comment>
<comment type="subcellular location">
    <subcellularLocation>
        <location evidence="1">Cytoplasm</location>
    </subcellularLocation>
</comment>
<comment type="similarity">
    <text evidence="1">Belongs to the IPP isomerase type 1 family.</text>
</comment>